<proteinExistence type="inferred from homology"/>
<gene>
    <name evidence="1" type="primary">SH</name>
    <name evidence="1" type="synonym">1A</name>
</gene>
<accession>P69359</accession>
<accession>P24570</accession>
<organism>
    <name type="scientific">Human respiratory syncytial virus B (strain 18537)</name>
    <dbReference type="NCBI Taxonomy" id="11251"/>
    <lineage>
        <taxon>Viruses</taxon>
        <taxon>Riboviria</taxon>
        <taxon>Orthornavirae</taxon>
        <taxon>Negarnaviricota</taxon>
        <taxon>Haploviricotina</taxon>
        <taxon>Monjiviricetes</taxon>
        <taxon>Mononegavirales</taxon>
        <taxon>Pneumoviridae</taxon>
        <taxon>Orthopneumovirus</taxon>
        <taxon>Orthopneumovirus hominis</taxon>
    </lineage>
</organism>
<name>SH_HRSV1</name>
<dbReference type="EMBL" id="D01042">
    <property type="protein sequence ID" value="BAA00849.1"/>
    <property type="molecule type" value="mRNA"/>
</dbReference>
<dbReference type="PIR" id="A35218">
    <property type="entry name" value="P1NZRS"/>
</dbReference>
<dbReference type="SMR" id="P69359"/>
<dbReference type="GlyCosmos" id="P69359">
    <property type="glycosylation" value="1 site, No reported glycans"/>
</dbReference>
<dbReference type="GO" id="GO:0044167">
    <property type="term" value="C:host cell endoplasmic reticulum membrane"/>
    <property type="evidence" value="ECO:0007669"/>
    <property type="project" value="UniProtKB-SubCell"/>
</dbReference>
<dbReference type="GO" id="GO:0044178">
    <property type="term" value="C:host cell Golgi membrane"/>
    <property type="evidence" value="ECO:0007669"/>
    <property type="project" value="UniProtKB-SubCell"/>
</dbReference>
<dbReference type="GO" id="GO:0020002">
    <property type="term" value="C:host cell plasma membrane"/>
    <property type="evidence" value="ECO:0007669"/>
    <property type="project" value="UniProtKB-SubCell"/>
</dbReference>
<dbReference type="GO" id="GO:0016020">
    <property type="term" value="C:membrane"/>
    <property type="evidence" value="ECO:0007669"/>
    <property type="project" value="UniProtKB-KW"/>
</dbReference>
<dbReference type="GO" id="GO:0055036">
    <property type="term" value="C:virion membrane"/>
    <property type="evidence" value="ECO:0007669"/>
    <property type="project" value="UniProtKB-SubCell"/>
</dbReference>
<dbReference type="GO" id="GO:0015267">
    <property type="term" value="F:channel activity"/>
    <property type="evidence" value="ECO:0007669"/>
    <property type="project" value="UniProtKB-KW"/>
</dbReference>
<dbReference type="GO" id="GO:0034220">
    <property type="term" value="P:monoatomic ion transmembrane transport"/>
    <property type="evidence" value="ECO:0007669"/>
    <property type="project" value="UniProtKB-KW"/>
</dbReference>
<dbReference type="GO" id="GO:0052151">
    <property type="term" value="P:symbiont-mediated activation of host apoptosis"/>
    <property type="evidence" value="ECO:0007669"/>
    <property type="project" value="UniProtKB-KW"/>
</dbReference>
<dbReference type="InterPro" id="IPR005327">
    <property type="entry name" value="SHP"/>
</dbReference>
<dbReference type="Pfam" id="PF03579">
    <property type="entry name" value="SHP"/>
    <property type="match status" value="1"/>
</dbReference>
<evidence type="ECO:0000250" key="1">
    <source>
        <dbReference type="UniProtKB" id="P0DOE5"/>
    </source>
</evidence>
<evidence type="ECO:0000255" key="2"/>
<evidence type="ECO:0000305" key="3"/>
<comment type="function">
    <text evidence="1">Viroporin that forms a homopentameric ion channel displaying low ion selectivity. May play a role in virus morphogenesis and pathogenicity at various stages of the viral life cycle. Accumulates at the membrane of the Golgi apparatus in infected cells and may facilitate virus release by modifying the secretory pathway. May enhance host membrane permeability and disrupt cellular ion homeostasis, which can be sensed as damage-associated molecular patterns/danger signals, triggering NLRP3 inflammasome activation and inflammatory immune response. Also inhibits host TNFA-mediated signaling pathway and may delay apoptosis, allowing time for the virus to replicate.</text>
</comment>
<comment type="activity regulation">
    <text evidence="1">Channel activity is inhibited by copper. Also inhibited by small-molecule pyronin B.</text>
</comment>
<comment type="subunit">
    <text evidence="1">Homopentamer forming a funnel-like pore. Interacts with glycoprotein G; this interaction occurs on the surface of virion particles and infected cells. Interacts with host BCAP31 (via C-terminus); this interaction is direct.</text>
</comment>
<comment type="subcellular location">
    <subcellularLocation>
        <location evidence="1">Virion membrane</location>
        <topology evidence="1">Single-pass type II membrane protein</topology>
    </subcellularLocation>
    <subcellularLocation>
        <location evidence="1">Host cell membrane</location>
        <topology evidence="1">Single-pass type II membrane protein</topology>
    </subcellularLocation>
    <subcellularLocation>
        <location evidence="1">Host Golgi apparatus membrane</location>
        <topology evidence="1">Single-pass type II membrane protein</topology>
    </subcellularLocation>
    <subcellularLocation>
        <location evidence="1">Host endoplasmic reticulum membrane</location>
        <topology evidence="1">Single-pass type II membrane protein</topology>
    </subcellularLocation>
    <text evidence="1">Present in very small amount in the virion. Detected in lipid rafts of host Golgi apparatus membrane.</text>
</comment>
<comment type="PTM">
    <text evidence="1">Four species of SH have been detected in infected cell cytoplasm: a 7.5 kDa non-glycosylated form (SH0), a 13-15 kDa form that contains one or two N-linked carbohydrate side chains of the high-mannose type (SHg), a 21-30 kDa polylactosaminoglycan-modified form of the protein (SHp), and the isoform generated by alternative translational initiation. Of these different forms, SH0 is by far the most abundant protein detected during virus infection.</text>
</comment>
<comment type="PTM">
    <text evidence="1">Tyrosine phosphorylated.</text>
</comment>
<comment type="similarity">
    <text evidence="3">Belongs to the orthopneumovirus small hydrophobic protein family.</text>
</comment>
<reference key="1">
    <citation type="journal article" date="1990" name="J. Gen. Virol.">
        <title>The small hydrophobic protein of human respiratory syncytial virus: comparison between antigenic subgroups A and B.</title>
        <authorList>
            <person name="Collins P.L."/>
            <person name="Olmsted R.A."/>
            <person name="Johnson P.R."/>
        </authorList>
    </citation>
    <scope>NUCLEOTIDE SEQUENCE [MRNA]</scope>
</reference>
<keyword id="KW-1073">Activation of host caspases by virus</keyword>
<keyword id="KW-0325">Glycoprotein</keyword>
<keyword id="KW-1032">Host cell membrane</keyword>
<keyword id="KW-1038">Host endoplasmic reticulum</keyword>
<keyword id="KW-1040">Host Golgi apparatus</keyword>
<keyword id="KW-1043">Host membrane</keyword>
<keyword id="KW-0945">Host-virus interaction</keyword>
<keyword id="KW-0407">Ion channel</keyword>
<keyword id="KW-0406">Ion transport</keyword>
<keyword id="KW-0472">Membrane</keyword>
<keyword id="KW-1119">Modulation of host cell apoptosis by virus</keyword>
<keyword id="KW-0597">Phosphoprotein</keyword>
<keyword id="KW-0735">Signal-anchor</keyword>
<keyword id="KW-0812">Transmembrane</keyword>
<keyword id="KW-1133">Transmembrane helix</keyword>
<keyword id="KW-0813">Transport</keyword>
<keyword id="KW-1182">Viral ion channel</keyword>
<keyword id="KW-0946">Virion</keyword>
<feature type="chain" id="PRO_0000142867" description="Small hydrophobic protein">
    <location>
        <begin position="1"/>
        <end position="65"/>
    </location>
</feature>
<feature type="topological domain" description="Intravirion" evidence="1">
    <location>
        <begin position="1"/>
        <end position="20"/>
    </location>
</feature>
<feature type="transmembrane region" description="Helical; Signal-anchor for type II membrane protein" evidence="1">
    <location>
        <begin position="21"/>
        <end position="44"/>
    </location>
</feature>
<feature type="topological domain" description="Virion surface" evidence="1">
    <location>
        <begin position="45"/>
        <end position="65"/>
    </location>
</feature>
<feature type="region of interest" description="Interaction with host BCAP31" evidence="1">
    <location>
        <begin position="6"/>
        <end position="15"/>
    </location>
</feature>
<feature type="region of interest" description="Interaction with small-molecule inhibitor" evidence="1">
    <location>
        <begin position="38"/>
        <end position="43"/>
    </location>
</feature>
<feature type="site" description="Involved in opening and closing mechanism of the pentameric structure" evidence="1">
    <location>
        <position position="22"/>
    </location>
</feature>
<feature type="glycosylation site" description="N-linked (GlcNAc...) asparagine; by host" evidence="2">
    <location>
        <position position="52"/>
    </location>
</feature>
<sequence>MGNTSITIEFTSKFWPYFTLIHMILTPISLLIIITIMIAILNKLSEHKTFCNKTLELGQMYQINT</sequence>
<organismHost>
    <name type="scientific">Homo sapiens</name>
    <name type="common">Human</name>
    <dbReference type="NCBI Taxonomy" id="9606"/>
</organismHost>
<protein>
    <recommendedName>
        <fullName evidence="1">Small hydrophobic protein</fullName>
    </recommendedName>
    <alternativeName>
        <fullName>Small protein 1A</fullName>
    </alternativeName>
</protein>